<accession>Q7ZAM5</accession>
<name>XERC_OCEIH</name>
<gene>
    <name evidence="1" type="primary">xerC</name>
    <name type="ordered locus">OB1548</name>
</gene>
<organism>
    <name type="scientific">Oceanobacillus iheyensis (strain DSM 14371 / CIP 107618 / JCM 11309 / KCTC 3954 / HTE831)</name>
    <dbReference type="NCBI Taxonomy" id="221109"/>
    <lineage>
        <taxon>Bacteria</taxon>
        <taxon>Bacillati</taxon>
        <taxon>Bacillota</taxon>
        <taxon>Bacilli</taxon>
        <taxon>Bacillales</taxon>
        <taxon>Bacillaceae</taxon>
        <taxon>Oceanobacillus</taxon>
    </lineage>
</organism>
<proteinExistence type="inferred from homology"/>
<sequence>MNQLELYIDTFVEYLQIEKNASPYTVKYYRNDLEIFADFLRSEGLSHIANVTYKDVRIFLTSLYEQELSRRSVSRKISTLRSFYRFLEREGYVEGNPFVQLHLPKTSKPVPGFLYQEELDKLFEVNDITTPLGQRDQALLEMLYGTGIRVSECQNLRLQDIDFAIGTIFVRGKGRKERYVPFGSFAEIALETYLQEGRTKLLEKSNSDTEFIFLNSRGGHLTNRGIRTILNKIVERASLTVHVHPHKLRHTFATHLLNEGADLRSVQELLGHESLSSTQIYTHVTKDHLREAYMKSHPRANGNKS</sequence>
<evidence type="ECO:0000255" key="1">
    <source>
        <dbReference type="HAMAP-Rule" id="MF_01808"/>
    </source>
</evidence>
<evidence type="ECO:0000255" key="2">
    <source>
        <dbReference type="PROSITE-ProRule" id="PRU01246"/>
    </source>
</evidence>
<evidence type="ECO:0000255" key="3">
    <source>
        <dbReference type="PROSITE-ProRule" id="PRU01248"/>
    </source>
</evidence>
<dbReference type="EMBL" id="BA000028">
    <property type="protein sequence ID" value="BAC13504.1"/>
    <property type="molecule type" value="Genomic_DNA"/>
</dbReference>
<dbReference type="RefSeq" id="WP_011065948.1">
    <property type="nucleotide sequence ID" value="NC_004193.1"/>
</dbReference>
<dbReference type="SMR" id="Q7ZAM5"/>
<dbReference type="STRING" id="221109.gene:10733788"/>
<dbReference type="KEGG" id="oih:OB1548"/>
<dbReference type="eggNOG" id="COG4974">
    <property type="taxonomic scope" value="Bacteria"/>
</dbReference>
<dbReference type="HOGENOM" id="CLU_027562_9_0_9"/>
<dbReference type="OrthoDB" id="9801717at2"/>
<dbReference type="PhylomeDB" id="Q7ZAM5"/>
<dbReference type="Proteomes" id="UP000000822">
    <property type="component" value="Chromosome"/>
</dbReference>
<dbReference type="GO" id="GO:0005737">
    <property type="term" value="C:cytoplasm"/>
    <property type="evidence" value="ECO:0007669"/>
    <property type="project" value="UniProtKB-SubCell"/>
</dbReference>
<dbReference type="GO" id="GO:0003677">
    <property type="term" value="F:DNA binding"/>
    <property type="evidence" value="ECO:0007669"/>
    <property type="project" value="UniProtKB-KW"/>
</dbReference>
<dbReference type="GO" id="GO:0009037">
    <property type="term" value="F:tyrosine-based site-specific recombinase activity"/>
    <property type="evidence" value="ECO:0007669"/>
    <property type="project" value="UniProtKB-UniRule"/>
</dbReference>
<dbReference type="GO" id="GO:0051301">
    <property type="term" value="P:cell division"/>
    <property type="evidence" value="ECO:0007669"/>
    <property type="project" value="UniProtKB-KW"/>
</dbReference>
<dbReference type="GO" id="GO:0007059">
    <property type="term" value="P:chromosome segregation"/>
    <property type="evidence" value="ECO:0007669"/>
    <property type="project" value="UniProtKB-UniRule"/>
</dbReference>
<dbReference type="GO" id="GO:0006313">
    <property type="term" value="P:DNA transposition"/>
    <property type="evidence" value="ECO:0007669"/>
    <property type="project" value="UniProtKB-UniRule"/>
</dbReference>
<dbReference type="CDD" id="cd00798">
    <property type="entry name" value="INT_XerDC_C"/>
    <property type="match status" value="1"/>
</dbReference>
<dbReference type="Gene3D" id="1.10.150.130">
    <property type="match status" value="1"/>
</dbReference>
<dbReference type="Gene3D" id="1.10.443.10">
    <property type="entry name" value="Intergrase catalytic core"/>
    <property type="match status" value="1"/>
</dbReference>
<dbReference type="HAMAP" id="MF_01808">
    <property type="entry name" value="Recomb_XerC_XerD"/>
    <property type="match status" value="1"/>
</dbReference>
<dbReference type="InterPro" id="IPR044068">
    <property type="entry name" value="CB"/>
</dbReference>
<dbReference type="InterPro" id="IPR011010">
    <property type="entry name" value="DNA_brk_join_enz"/>
</dbReference>
<dbReference type="InterPro" id="IPR013762">
    <property type="entry name" value="Integrase-like_cat_sf"/>
</dbReference>
<dbReference type="InterPro" id="IPR002104">
    <property type="entry name" value="Integrase_catalytic"/>
</dbReference>
<dbReference type="InterPro" id="IPR010998">
    <property type="entry name" value="Integrase_recombinase_N"/>
</dbReference>
<dbReference type="InterPro" id="IPR004107">
    <property type="entry name" value="Integrase_SAM-like_N"/>
</dbReference>
<dbReference type="InterPro" id="IPR011931">
    <property type="entry name" value="Recomb_XerC"/>
</dbReference>
<dbReference type="InterPro" id="IPR023009">
    <property type="entry name" value="Tyrosine_recombinase_XerC/XerD"/>
</dbReference>
<dbReference type="InterPro" id="IPR050090">
    <property type="entry name" value="Tyrosine_recombinase_XerCD"/>
</dbReference>
<dbReference type="NCBIfam" id="NF001399">
    <property type="entry name" value="PRK00283.1"/>
    <property type="match status" value="1"/>
</dbReference>
<dbReference type="NCBIfam" id="NF040815">
    <property type="entry name" value="recomb_XerA_Arch"/>
    <property type="match status" value="1"/>
</dbReference>
<dbReference type="NCBIfam" id="TIGR02224">
    <property type="entry name" value="recomb_XerC"/>
    <property type="match status" value="1"/>
</dbReference>
<dbReference type="PANTHER" id="PTHR30349">
    <property type="entry name" value="PHAGE INTEGRASE-RELATED"/>
    <property type="match status" value="1"/>
</dbReference>
<dbReference type="PANTHER" id="PTHR30349:SF77">
    <property type="entry name" value="TYROSINE RECOMBINASE XERC"/>
    <property type="match status" value="1"/>
</dbReference>
<dbReference type="Pfam" id="PF02899">
    <property type="entry name" value="Phage_int_SAM_1"/>
    <property type="match status" value="1"/>
</dbReference>
<dbReference type="Pfam" id="PF00589">
    <property type="entry name" value="Phage_integrase"/>
    <property type="match status" value="1"/>
</dbReference>
<dbReference type="SUPFAM" id="SSF56349">
    <property type="entry name" value="DNA breaking-rejoining enzymes"/>
    <property type="match status" value="1"/>
</dbReference>
<dbReference type="PROSITE" id="PS51900">
    <property type="entry name" value="CB"/>
    <property type="match status" value="1"/>
</dbReference>
<dbReference type="PROSITE" id="PS51898">
    <property type="entry name" value="TYR_RECOMBINASE"/>
    <property type="match status" value="1"/>
</dbReference>
<reference key="1">
    <citation type="journal article" date="2002" name="Nucleic Acids Res.">
        <title>Genome sequence of Oceanobacillus iheyensis isolated from the Iheya Ridge and its unexpected adaptive capabilities to extreme environments.</title>
        <authorList>
            <person name="Takami H."/>
            <person name="Takaki Y."/>
            <person name="Uchiyama I."/>
        </authorList>
    </citation>
    <scope>NUCLEOTIDE SEQUENCE [LARGE SCALE GENOMIC DNA]</scope>
    <source>
        <strain>DSM 14371 / CIP 107618 / JCM 11309 / KCTC 3954 / HTE831</strain>
    </source>
</reference>
<feature type="chain" id="PRO_0000095311" description="Tyrosine recombinase XerC">
    <location>
        <begin position="1"/>
        <end position="305"/>
    </location>
</feature>
<feature type="domain" description="Core-binding (CB)" evidence="3">
    <location>
        <begin position="2"/>
        <end position="88"/>
    </location>
</feature>
<feature type="domain" description="Tyr recombinase" evidence="2">
    <location>
        <begin position="109"/>
        <end position="294"/>
    </location>
</feature>
<feature type="active site" evidence="1">
    <location>
        <position position="149"/>
    </location>
</feature>
<feature type="active site" evidence="1">
    <location>
        <position position="173"/>
    </location>
</feature>
<feature type="active site" evidence="1">
    <location>
        <position position="246"/>
    </location>
</feature>
<feature type="active site" evidence="1">
    <location>
        <position position="249"/>
    </location>
</feature>
<feature type="active site" evidence="1">
    <location>
        <position position="272"/>
    </location>
</feature>
<feature type="active site" description="O-(3'-phospho-DNA)-tyrosine intermediate" evidence="1">
    <location>
        <position position="281"/>
    </location>
</feature>
<keyword id="KW-0131">Cell cycle</keyword>
<keyword id="KW-0132">Cell division</keyword>
<keyword id="KW-0159">Chromosome partition</keyword>
<keyword id="KW-0963">Cytoplasm</keyword>
<keyword id="KW-0229">DNA integration</keyword>
<keyword id="KW-0233">DNA recombination</keyword>
<keyword id="KW-0238">DNA-binding</keyword>
<keyword id="KW-1185">Reference proteome</keyword>
<comment type="function">
    <text evidence="1">Site-specific tyrosine recombinase, which acts by catalyzing the cutting and rejoining of the recombining DNA molecules. The XerC-XerD complex is essential to convert dimers of the bacterial chromosome into monomers to permit their segregation at cell division. It also contributes to the segregational stability of plasmids.</text>
</comment>
<comment type="subunit">
    <text evidence="1">Forms a cyclic heterotetrameric complex composed of two molecules of XerC and two molecules of XerD.</text>
</comment>
<comment type="subcellular location">
    <subcellularLocation>
        <location evidence="1">Cytoplasm</location>
    </subcellularLocation>
</comment>
<comment type="similarity">
    <text evidence="1">Belongs to the 'phage' integrase family. XerC subfamily.</text>
</comment>
<protein>
    <recommendedName>
        <fullName evidence="1">Tyrosine recombinase XerC</fullName>
    </recommendedName>
</protein>